<sequence length="677" mass="76000">MNGVEVPAKIQKRIERLRQEINDHNYRYYVLSQPTIPDSVYDELFHELQKLEKKYPETITPSSPTQRVGAEPLKVFEPVHHEIPMLSLDNVFDEKGLRAFDKRIRQRLKLDKPFEYVCEPKMDGVALSLLYENGELIRAATRGDGYTGENVTQNTRTIASVPLQLRGNDYPELVEIRGEVLMPREGFAKFNREAEKRGDKTFANPRNAASGSLRQLDPRITAKRPLIFYGYLIGLLKGKDFPKNHCDVLKWFKDWGIPVISEIKVVGGIEGCLDYYEHLVKTREKMPFDIDGIVIKVNSLQVQAELGFVSRAPRWAIAYKFPAQEKMTVVKAIEFQVGRTGAVTPVARLEPVSVSGVTVSNATLHNFDELYRKDVRVGDTVIVRRAGDVIPEVVGPILAKRPKKAKLIKIPSRCPVCHAEVIKPEGEAVARCVGGLYCRAQLRESIKHFASRRALDIEGLGDKLVELFIQEKLIKDITGIYQLKKSAITALPRMGEKSAENLLTAIEKSKKTTLPRFLYALGIRGVGDTTARTLARHFHELDLLMKASIETLQEIRDIGPVAAENIHAFFHQKHNAELINKLIHLGVHWPQEKAVVKSEIAGKTFVLTGALKSLTREEAEEKIERSGGKATSSVSKNTDYVIVGENPGSKYEKAKALGISLIDEEAFLKLLKSKGVF</sequence>
<name>DNLJ_COXB2</name>
<proteinExistence type="inferred from homology"/>
<comment type="function">
    <text evidence="1">DNA ligase that catalyzes the formation of phosphodiester linkages between 5'-phosphoryl and 3'-hydroxyl groups in double-stranded DNA using NAD as a coenzyme and as the energy source for the reaction. It is essential for DNA replication and repair of damaged DNA.</text>
</comment>
<comment type="catalytic activity">
    <reaction evidence="1">
        <text>NAD(+) + (deoxyribonucleotide)n-3'-hydroxyl + 5'-phospho-(deoxyribonucleotide)m = (deoxyribonucleotide)n+m + AMP + beta-nicotinamide D-nucleotide.</text>
        <dbReference type="EC" id="6.5.1.2"/>
    </reaction>
</comment>
<comment type="cofactor">
    <cofactor evidence="1">
        <name>Mg(2+)</name>
        <dbReference type="ChEBI" id="CHEBI:18420"/>
    </cofactor>
    <cofactor evidence="1">
        <name>Mn(2+)</name>
        <dbReference type="ChEBI" id="CHEBI:29035"/>
    </cofactor>
</comment>
<comment type="similarity">
    <text evidence="1">Belongs to the NAD-dependent DNA ligase family. LigA subfamily.</text>
</comment>
<organism>
    <name type="scientific">Coxiella burnetii (strain CbuG_Q212)</name>
    <name type="common">Coxiella burnetii (strain Q212)</name>
    <dbReference type="NCBI Taxonomy" id="434923"/>
    <lineage>
        <taxon>Bacteria</taxon>
        <taxon>Pseudomonadati</taxon>
        <taxon>Pseudomonadota</taxon>
        <taxon>Gammaproteobacteria</taxon>
        <taxon>Legionellales</taxon>
        <taxon>Coxiellaceae</taxon>
        <taxon>Coxiella</taxon>
    </lineage>
</organism>
<dbReference type="EC" id="6.5.1.2" evidence="1"/>
<dbReference type="EMBL" id="CP001019">
    <property type="protein sequence ID" value="ACJ18754.1"/>
    <property type="molecule type" value="Genomic_DNA"/>
</dbReference>
<dbReference type="RefSeq" id="WP_012570269.1">
    <property type="nucleotide sequence ID" value="NC_011527.1"/>
</dbReference>
<dbReference type="SMR" id="B6J1C6"/>
<dbReference type="KEGG" id="cbg:CbuG_1454"/>
<dbReference type="HOGENOM" id="CLU_007764_2_1_6"/>
<dbReference type="GO" id="GO:0005829">
    <property type="term" value="C:cytosol"/>
    <property type="evidence" value="ECO:0007669"/>
    <property type="project" value="TreeGrafter"/>
</dbReference>
<dbReference type="GO" id="GO:0003677">
    <property type="term" value="F:DNA binding"/>
    <property type="evidence" value="ECO:0007669"/>
    <property type="project" value="InterPro"/>
</dbReference>
<dbReference type="GO" id="GO:0003911">
    <property type="term" value="F:DNA ligase (NAD+) activity"/>
    <property type="evidence" value="ECO:0007669"/>
    <property type="project" value="UniProtKB-UniRule"/>
</dbReference>
<dbReference type="GO" id="GO:0046872">
    <property type="term" value="F:metal ion binding"/>
    <property type="evidence" value="ECO:0007669"/>
    <property type="project" value="UniProtKB-KW"/>
</dbReference>
<dbReference type="GO" id="GO:0006281">
    <property type="term" value="P:DNA repair"/>
    <property type="evidence" value="ECO:0007669"/>
    <property type="project" value="UniProtKB-KW"/>
</dbReference>
<dbReference type="GO" id="GO:0006260">
    <property type="term" value="P:DNA replication"/>
    <property type="evidence" value="ECO:0007669"/>
    <property type="project" value="UniProtKB-KW"/>
</dbReference>
<dbReference type="CDD" id="cd17748">
    <property type="entry name" value="BRCT_DNA_ligase_like"/>
    <property type="match status" value="1"/>
</dbReference>
<dbReference type="CDD" id="cd00114">
    <property type="entry name" value="LIGANc"/>
    <property type="match status" value="1"/>
</dbReference>
<dbReference type="FunFam" id="1.10.150.20:FF:000006">
    <property type="entry name" value="DNA ligase"/>
    <property type="match status" value="1"/>
</dbReference>
<dbReference type="FunFam" id="1.10.150.20:FF:000007">
    <property type="entry name" value="DNA ligase"/>
    <property type="match status" value="1"/>
</dbReference>
<dbReference type="FunFam" id="1.10.287.610:FF:000002">
    <property type="entry name" value="DNA ligase"/>
    <property type="match status" value="1"/>
</dbReference>
<dbReference type="FunFam" id="2.40.50.140:FF:000012">
    <property type="entry name" value="DNA ligase"/>
    <property type="match status" value="1"/>
</dbReference>
<dbReference type="FunFam" id="3.30.470.30:FF:000001">
    <property type="entry name" value="DNA ligase"/>
    <property type="match status" value="1"/>
</dbReference>
<dbReference type="FunFam" id="3.40.50.10190:FF:000086">
    <property type="entry name" value="DNA ligase"/>
    <property type="match status" value="1"/>
</dbReference>
<dbReference type="Gene3D" id="6.20.10.30">
    <property type="match status" value="1"/>
</dbReference>
<dbReference type="Gene3D" id="1.10.150.20">
    <property type="entry name" value="5' to 3' exonuclease, C-terminal subdomain"/>
    <property type="match status" value="2"/>
</dbReference>
<dbReference type="Gene3D" id="3.40.50.10190">
    <property type="entry name" value="BRCT domain"/>
    <property type="match status" value="1"/>
</dbReference>
<dbReference type="Gene3D" id="3.30.470.30">
    <property type="entry name" value="DNA ligase/mRNA capping enzyme"/>
    <property type="match status" value="1"/>
</dbReference>
<dbReference type="Gene3D" id="1.10.287.610">
    <property type="entry name" value="Helix hairpin bin"/>
    <property type="match status" value="1"/>
</dbReference>
<dbReference type="Gene3D" id="2.40.50.140">
    <property type="entry name" value="Nucleic acid-binding proteins"/>
    <property type="match status" value="1"/>
</dbReference>
<dbReference type="HAMAP" id="MF_01588">
    <property type="entry name" value="DNA_ligase_A"/>
    <property type="match status" value="1"/>
</dbReference>
<dbReference type="InterPro" id="IPR001357">
    <property type="entry name" value="BRCT_dom"/>
</dbReference>
<dbReference type="InterPro" id="IPR036420">
    <property type="entry name" value="BRCT_dom_sf"/>
</dbReference>
<dbReference type="InterPro" id="IPR041663">
    <property type="entry name" value="DisA/LigA_HHH"/>
</dbReference>
<dbReference type="InterPro" id="IPR001679">
    <property type="entry name" value="DNA_ligase"/>
</dbReference>
<dbReference type="InterPro" id="IPR018239">
    <property type="entry name" value="DNA_ligase_AS"/>
</dbReference>
<dbReference type="InterPro" id="IPR033136">
    <property type="entry name" value="DNA_ligase_CS"/>
</dbReference>
<dbReference type="InterPro" id="IPR013839">
    <property type="entry name" value="DNAligase_adenylation"/>
</dbReference>
<dbReference type="InterPro" id="IPR013840">
    <property type="entry name" value="DNAligase_N"/>
</dbReference>
<dbReference type="InterPro" id="IPR003583">
    <property type="entry name" value="Hlx-hairpin-Hlx_DNA-bd_motif"/>
</dbReference>
<dbReference type="InterPro" id="IPR012340">
    <property type="entry name" value="NA-bd_OB-fold"/>
</dbReference>
<dbReference type="InterPro" id="IPR004150">
    <property type="entry name" value="NAD_DNA_ligase_OB"/>
</dbReference>
<dbReference type="InterPro" id="IPR010994">
    <property type="entry name" value="RuvA_2-like"/>
</dbReference>
<dbReference type="InterPro" id="IPR004149">
    <property type="entry name" value="Znf_DNAligase_C4"/>
</dbReference>
<dbReference type="NCBIfam" id="TIGR00575">
    <property type="entry name" value="dnlj"/>
    <property type="match status" value="1"/>
</dbReference>
<dbReference type="NCBIfam" id="NF005932">
    <property type="entry name" value="PRK07956.1"/>
    <property type="match status" value="1"/>
</dbReference>
<dbReference type="PANTHER" id="PTHR23389">
    <property type="entry name" value="CHROMOSOME TRANSMISSION FIDELITY FACTOR 18"/>
    <property type="match status" value="1"/>
</dbReference>
<dbReference type="PANTHER" id="PTHR23389:SF9">
    <property type="entry name" value="DNA LIGASE"/>
    <property type="match status" value="1"/>
</dbReference>
<dbReference type="Pfam" id="PF00533">
    <property type="entry name" value="BRCT"/>
    <property type="match status" value="1"/>
</dbReference>
<dbReference type="Pfam" id="PF01653">
    <property type="entry name" value="DNA_ligase_aden"/>
    <property type="match status" value="1"/>
</dbReference>
<dbReference type="Pfam" id="PF03120">
    <property type="entry name" value="DNA_ligase_OB"/>
    <property type="match status" value="1"/>
</dbReference>
<dbReference type="Pfam" id="PF03119">
    <property type="entry name" value="DNA_ligase_ZBD"/>
    <property type="match status" value="1"/>
</dbReference>
<dbReference type="Pfam" id="PF12826">
    <property type="entry name" value="HHH_2"/>
    <property type="match status" value="1"/>
</dbReference>
<dbReference type="Pfam" id="PF14520">
    <property type="entry name" value="HHH_5"/>
    <property type="match status" value="1"/>
</dbReference>
<dbReference type="Pfam" id="PF22745">
    <property type="entry name" value="Nlig-Ia"/>
    <property type="match status" value="1"/>
</dbReference>
<dbReference type="PIRSF" id="PIRSF001604">
    <property type="entry name" value="LigA"/>
    <property type="match status" value="1"/>
</dbReference>
<dbReference type="SMART" id="SM00292">
    <property type="entry name" value="BRCT"/>
    <property type="match status" value="1"/>
</dbReference>
<dbReference type="SMART" id="SM00278">
    <property type="entry name" value="HhH1"/>
    <property type="match status" value="4"/>
</dbReference>
<dbReference type="SMART" id="SM00532">
    <property type="entry name" value="LIGANc"/>
    <property type="match status" value="1"/>
</dbReference>
<dbReference type="SUPFAM" id="SSF52113">
    <property type="entry name" value="BRCT domain"/>
    <property type="match status" value="1"/>
</dbReference>
<dbReference type="SUPFAM" id="SSF56091">
    <property type="entry name" value="DNA ligase/mRNA capping enzyme, catalytic domain"/>
    <property type="match status" value="1"/>
</dbReference>
<dbReference type="SUPFAM" id="SSF50249">
    <property type="entry name" value="Nucleic acid-binding proteins"/>
    <property type="match status" value="1"/>
</dbReference>
<dbReference type="SUPFAM" id="SSF47781">
    <property type="entry name" value="RuvA domain 2-like"/>
    <property type="match status" value="1"/>
</dbReference>
<dbReference type="PROSITE" id="PS50172">
    <property type="entry name" value="BRCT"/>
    <property type="match status" value="1"/>
</dbReference>
<dbReference type="PROSITE" id="PS01055">
    <property type="entry name" value="DNA_LIGASE_N1"/>
    <property type="match status" value="1"/>
</dbReference>
<dbReference type="PROSITE" id="PS01056">
    <property type="entry name" value="DNA_LIGASE_N2"/>
    <property type="match status" value="1"/>
</dbReference>
<accession>B6J1C6</accession>
<feature type="chain" id="PRO_0000380351" description="DNA ligase">
    <location>
        <begin position="1"/>
        <end position="677"/>
    </location>
</feature>
<feature type="domain" description="BRCT" evidence="1">
    <location>
        <begin position="595"/>
        <end position="677"/>
    </location>
</feature>
<feature type="active site" description="N6-AMP-lysine intermediate" evidence="1">
    <location>
        <position position="121"/>
    </location>
</feature>
<feature type="binding site" evidence="1">
    <location>
        <begin position="38"/>
        <end position="42"/>
    </location>
    <ligand>
        <name>NAD(+)</name>
        <dbReference type="ChEBI" id="CHEBI:57540"/>
    </ligand>
</feature>
<feature type="binding site" evidence="1">
    <location>
        <begin position="87"/>
        <end position="88"/>
    </location>
    <ligand>
        <name>NAD(+)</name>
        <dbReference type="ChEBI" id="CHEBI:57540"/>
    </ligand>
</feature>
<feature type="binding site" evidence="1">
    <location>
        <position position="119"/>
    </location>
    <ligand>
        <name>NAD(+)</name>
        <dbReference type="ChEBI" id="CHEBI:57540"/>
    </ligand>
</feature>
<feature type="binding site" evidence="1">
    <location>
        <position position="142"/>
    </location>
    <ligand>
        <name>NAD(+)</name>
        <dbReference type="ChEBI" id="CHEBI:57540"/>
    </ligand>
</feature>
<feature type="binding site" evidence="1">
    <location>
        <position position="179"/>
    </location>
    <ligand>
        <name>NAD(+)</name>
        <dbReference type="ChEBI" id="CHEBI:57540"/>
    </ligand>
</feature>
<feature type="binding site" evidence="1">
    <location>
        <position position="296"/>
    </location>
    <ligand>
        <name>NAD(+)</name>
        <dbReference type="ChEBI" id="CHEBI:57540"/>
    </ligand>
</feature>
<feature type="binding site" evidence="1">
    <location>
        <position position="320"/>
    </location>
    <ligand>
        <name>NAD(+)</name>
        <dbReference type="ChEBI" id="CHEBI:57540"/>
    </ligand>
</feature>
<feature type="binding site" evidence="1">
    <location>
        <position position="414"/>
    </location>
    <ligand>
        <name>Zn(2+)</name>
        <dbReference type="ChEBI" id="CHEBI:29105"/>
    </ligand>
</feature>
<feature type="binding site" evidence="1">
    <location>
        <position position="417"/>
    </location>
    <ligand>
        <name>Zn(2+)</name>
        <dbReference type="ChEBI" id="CHEBI:29105"/>
    </ligand>
</feature>
<feature type="binding site" evidence="1">
    <location>
        <position position="432"/>
    </location>
    <ligand>
        <name>Zn(2+)</name>
        <dbReference type="ChEBI" id="CHEBI:29105"/>
    </ligand>
</feature>
<feature type="binding site" evidence="1">
    <location>
        <position position="438"/>
    </location>
    <ligand>
        <name>Zn(2+)</name>
        <dbReference type="ChEBI" id="CHEBI:29105"/>
    </ligand>
</feature>
<gene>
    <name evidence="1" type="primary">ligA</name>
    <name type="ordered locus">CbuG_1454</name>
</gene>
<keyword id="KW-0227">DNA damage</keyword>
<keyword id="KW-0234">DNA repair</keyword>
<keyword id="KW-0235">DNA replication</keyword>
<keyword id="KW-0436">Ligase</keyword>
<keyword id="KW-0460">Magnesium</keyword>
<keyword id="KW-0464">Manganese</keyword>
<keyword id="KW-0479">Metal-binding</keyword>
<keyword id="KW-0520">NAD</keyword>
<keyword id="KW-0862">Zinc</keyword>
<evidence type="ECO:0000255" key="1">
    <source>
        <dbReference type="HAMAP-Rule" id="MF_01588"/>
    </source>
</evidence>
<reference key="1">
    <citation type="journal article" date="2009" name="Infect. Immun.">
        <title>Comparative genomics reveal extensive transposon-mediated genomic plasticity and diversity among potential effector proteins within the genus Coxiella.</title>
        <authorList>
            <person name="Beare P.A."/>
            <person name="Unsworth N."/>
            <person name="Andoh M."/>
            <person name="Voth D.E."/>
            <person name="Omsland A."/>
            <person name="Gilk S.D."/>
            <person name="Williams K.P."/>
            <person name="Sobral B.W."/>
            <person name="Kupko J.J. III"/>
            <person name="Porcella S.F."/>
            <person name="Samuel J.E."/>
            <person name="Heinzen R.A."/>
        </authorList>
    </citation>
    <scope>NUCLEOTIDE SEQUENCE [LARGE SCALE GENOMIC DNA]</scope>
    <source>
        <strain>CbuG_Q212</strain>
    </source>
</reference>
<protein>
    <recommendedName>
        <fullName evidence="1">DNA ligase</fullName>
        <ecNumber evidence="1">6.5.1.2</ecNumber>
    </recommendedName>
    <alternativeName>
        <fullName evidence="1">Polydeoxyribonucleotide synthase [NAD(+)]</fullName>
    </alternativeName>
</protein>